<accession>P47932</accession>
<sequence>MSSRFLLQLLGFWLLLSQPCRTRVSEEWMDGFIRMCGREYARELIKICGASVGRLALSQEEPALLARQATEVVPSFINKDAEPFDTTLKCLPNLSEELKAVLSEAQASLPELQHAPVLSDSVVSLEGFKKTLHDRLGEAEDGSPPGLKYLQSDTHSRKKRESGGLMSQQCCHVGCSRRSIAKLYC</sequence>
<feature type="signal peptide" evidence="1">
    <location>
        <begin position="1"/>
        <end position="22"/>
    </location>
</feature>
<feature type="peptide" id="PRO_0000016103" description="Relaxin B chain" evidence="1">
    <location>
        <begin position="23"/>
        <end position="57"/>
    </location>
</feature>
<feature type="propeptide" id="PRO_0000016104" description="Connecting peptide" evidence="1">
    <location>
        <begin position="58"/>
        <end position="156"/>
    </location>
</feature>
<feature type="peptide" id="PRO_0000016105" description="Relaxin A chain" evidence="1">
    <location>
        <begin position="161"/>
        <end position="185"/>
    </location>
</feature>
<feature type="region of interest" description="Disordered" evidence="2">
    <location>
        <begin position="135"/>
        <end position="161"/>
    </location>
</feature>
<feature type="disulfide bond" description="Interchain (between B and A chains)" evidence="3">
    <location>
        <begin position="36"/>
        <end position="171"/>
    </location>
</feature>
<feature type="disulfide bond" description="Interchain (between B and A chains)" evidence="3">
    <location>
        <begin position="48"/>
        <end position="185"/>
    </location>
</feature>
<feature type="disulfide bond" evidence="3">
    <location>
        <begin position="170"/>
        <end position="175"/>
    </location>
</feature>
<name>REL1_MOUSE</name>
<gene>
    <name type="primary">Rln1</name>
    <name type="synonym">Rln</name>
    <name type="synonym">Rlx</name>
</gene>
<evidence type="ECO:0000250" key="1"/>
<evidence type="ECO:0000256" key="2">
    <source>
        <dbReference type="SAM" id="MobiDB-lite"/>
    </source>
</evidence>
<evidence type="ECO:0000269" key="3">
    <source>
    </source>
</evidence>
<evidence type="ECO:0000305" key="4"/>
<protein>
    <recommendedName>
        <fullName>Prorelaxin 1</fullName>
    </recommendedName>
    <component>
        <recommendedName>
            <fullName>Relaxin B chain</fullName>
        </recommendedName>
    </component>
    <component>
        <recommendedName>
            <fullName>Relaxin A chain</fullName>
        </recommendedName>
    </component>
</protein>
<reference key="1">
    <citation type="journal article" date="1993" name="J. Mol. Endocrinol.">
        <title>The mouse relaxin gene: nucleotide sequence and expression.</title>
        <authorList>
            <person name="Evans B.A."/>
            <person name="John M."/>
            <person name="Fowler K.J."/>
            <person name="Summers R.J."/>
            <person name="Cronk M."/>
            <person name="Shine J."/>
            <person name="Tregear G.W."/>
        </authorList>
    </citation>
    <scope>NUCLEOTIDE SEQUENCE [MRNA]</scope>
    <source>
        <strain>SWR/J</strain>
        <tissue>Ovary</tissue>
    </source>
</reference>
<reference key="2">
    <citation type="journal article" date="1993" name="Biochem. Biophys. Res. Commun.">
        <title>Mouse relaxin: synthesis and biological activity of the first relaxin with an unusual crosslinking pattern.</title>
        <authorList>
            <person name="Bullesbach E.E."/>
            <person name="Schwabe C."/>
        </authorList>
    </citation>
    <scope>DISULFIDE BONDS</scope>
</reference>
<organism>
    <name type="scientific">Mus musculus</name>
    <name type="common">Mouse</name>
    <dbReference type="NCBI Taxonomy" id="10090"/>
    <lineage>
        <taxon>Eukaryota</taxon>
        <taxon>Metazoa</taxon>
        <taxon>Chordata</taxon>
        <taxon>Craniata</taxon>
        <taxon>Vertebrata</taxon>
        <taxon>Euteleostomi</taxon>
        <taxon>Mammalia</taxon>
        <taxon>Eutheria</taxon>
        <taxon>Euarchontoglires</taxon>
        <taxon>Glires</taxon>
        <taxon>Rodentia</taxon>
        <taxon>Myomorpha</taxon>
        <taxon>Muroidea</taxon>
        <taxon>Muridae</taxon>
        <taxon>Murinae</taxon>
        <taxon>Mus</taxon>
        <taxon>Mus</taxon>
    </lineage>
</organism>
<proteinExistence type="evidence at protein level"/>
<comment type="function">
    <text>Relaxin is an ovarian hormone that acts with estrogen to produce dilatation of the birth canal in many mammals.</text>
</comment>
<comment type="subunit">
    <text>Heterodimer of a B chain and an A chain linked by two disulfide bonds.</text>
</comment>
<comment type="subcellular location">
    <subcellularLocation>
        <location>Secreted</location>
    </subcellularLocation>
</comment>
<comment type="similarity">
    <text evidence="4">Belongs to the insulin family.</text>
</comment>
<keyword id="KW-0165">Cleavage on pair of basic residues</keyword>
<keyword id="KW-1015">Disulfide bond</keyword>
<keyword id="KW-0372">Hormone</keyword>
<keyword id="KW-1185">Reference proteome</keyword>
<keyword id="KW-0964">Secreted</keyword>
<keyword id="KW-0732">Signal</keyword>
<dbReference type="EMBL" id="Z27088">
    <property type="protein sequence ID" value="CAA81611.1"/>
    <property type="molecule type" value="mRNA"/>
</dbReference>
<dbReference type="CCDS" id="CCDS29733.1"/>
<dbReference type="PIR" id="S48082">
    <property type="entry name" value="S48082"/>
</dbReference>
<dbReference type="SMR" id="P47932"/>
<dbReference type="FunCoup" id="P47932">
    <property type="interactions" value="66"/>
</dbReference>
<dbReference type="STRING" id="10090.ENSMUSP00000043376"/>
<dbReference type="PaxDb" id="10090-ENSMUSP00000043376"/>
<dbReference type="AGR" id="MGI:97931"/>
<dbReference type="MGI" id="MGI:97931">
    <property type="gene designation" value="Rln1"/>
</dbReference>
<dbReference type="eggNOG" id="ENOG502TH8D">
    <property type="taxonomic scope" value="Eukaryota"/>
</dbReference>
<dbReference type="InParanoid" id="P47932"/>
<dbReference type="PhylomeDB" id="P47932"/>
<dbReference type="Reactome" id="R-MMU-418555">
    <property type="pathway name" value="G alpha (s) signalling events"/>
</dbReference>
<dbReference type="Reactome" id="R-MMU-444821">
    <property type="pathway name" value="Relaxin receptors"/>
</dbReference>
<dbReference type="PRO" id="PR:P47932"/>
<dbReference type="Proteomes" id="UP000000589">
    <property type="component" value="Unplaced"/>
</dbReference>
<dbReference type="RNAct" id="P47932">
    <property type="molecule type" value="protein"/>
</dbReference>
<dbReference type="GO" id="GO:0005576">
    <property type="term" value="C:extracellular region"/>
    <property type="evidence" value="ECO:0007669"/>
    <property type="project" value="UniProtKB-SubCell"/>
</dbReference>
<dbReference type="GO" id="GO:0005179">
    <property type="term" value="F:hormone activity"/>
    <property type="evidence" value="ECO:0007669"/>
    <property type="project" value="UniProtKB-KW"/>
</dbReference>
<dbReference type="GO" id="GO:0005102">
    <property type="term" value="F:signaling receptor binding"/>
    <property type="evidence" value="ECO:0000314"/>
    <property type="project" value="MGI"/>
</dbReference>
<dbReference type="GO" id="GO:0007188">
    <property type="term" value="P:adenylate cyclase-modulating G protein-coupled receptor signaling pathway"/>
    <property type="evidence" value="ECO:0000266"/>
    <property type="project" value="MGI"/>
</dbReference>
<dbReference type="GO" id="GO:0048589">
    <property type="term" value="P:developmental growth"/>
    <property type="evidence" value="ECO:0000315"/>
    <property type="project" value="MGI"/>
</dbReference>
<dbReference type="GO" id="GO:0060443">
    <property type="term" value="P:mammary gland morphogenesis"/>
    <property type="evidence" value="ECO:0000315"/>
    <property type="project" value="CACAO"/>
</dbReference>
<dbReference type="GO" id="GO:0060618">
    <property type="term" value="P:nipple development"/>
    <property type="evidence" value="ECO:0000315"/>
    <property type="project" value="CACAO"/>
</dbReference>
<dbReference type="GO" id="GO:0060736">
    <property type="term" value="P:prostate gland growth"/>
    <property type="evidence" value="ECO:0000315"/>
    <property type="project" value="MGI"/>
</dbReference>
<dbReference type="GO" id="GO:0042981">
    <property type="term" value="P:regulation of apoptotic process"/>
    <property type="evidence" value="ECO:0000315"/>
    <property type="project" value="CACAO"/>
</dbReference>
<dbReference type="GO" id="GO:0010749">
    <property type="term" value="P:regulation of nitric oxide mediated signal transduction"/>
    <property type="evidence" value="ECO:0000315"/>
    <property type="project" value="MGI"/>
</dbReference>
<dbReference type="GO" id="GO:0007283">
    <property type="term" value="P:spermatogenesis"/>
    <property type="evidence" value="ECO:0000315"/>
    <property type="project" value="CACAO"/>
</dbReference>
<dbReference type="CDD" id="cd04365">
    <property type="entry name" value="IlGF_relaxin_like"/>
    <property type="match status" value="1"/>
</dbReference>
<dbReference type="InterPro" id="IPR016179">
    <property type="entry name" value="Insulin-like"/>
</dbReference>
<dbReference type="InterPro" id="IPR036438">
    <property type="entry name" value="Insulin-like_sf"/>
</dbReference>
<dbReference type="InterPro" id="IPR022421">
    <property type="entry name" value="Relaxin"/>
</dbReference>
<dbReference type="InterPro" id="IPR051042">
    <property type="entry name" value="Repro_Hormone_Insulin-like"/>
</dbReference>
<dbReference type="PANTHER" id="PTHR12004:SF13">
    <property type="entry name" value="PRORELAXIN H2"/>
    <property type="match status" value="1"/>
</dbReference>
<dbReference type="PANTHER" id="PTHR12004">
    <property type="entry name" value="RELAXIN"/>
    <property type="match status" value="1"/>
</dbReference>
<dbReference type="Pfam" id="PF00049">
    <property type="entry name" value="Insulin"/>
    <property type="match status" value="1"/>
</dbReference>
<dbReference type="PRINTS" id="PR02004">
    <property type="entry name" value="RELAXIN"/>
</dbReference>
<dbReference type="SMART" id="SM00078">
    <property type="entry name" value="IlGF"/>
    <property type="match status" value="1"/>
</dbReference>
<dbReference type="SUPFAM" id="SSF56994">
    <property type="entry name" value="Insulin-like"/>
    <property type="match status" value="1"/>
</dbReference>